<reference key="1">
    <citation type="journal article" date="1996" name="J. Cell Sci.">
        <title>Antisense RNA inhibition of the putative vacuolar H(+)-ATPase proteolipid of Dictyostelium reduces intracellular Ca2+ transport and cell viability.</title>
        <authorList>
            <person name="Xie Y."/>
            <person name="Coukell M.B."/>
            <person name="Gombos Z."/>
        </authorList>
    </citation>
    <scope>NUCLEOTIDE SEQUENCE [MRNA]</scope>
    <source>
        <strain>AX2</strain>
    </source>
</reference>
<reference key="2">
    <citation type="journal article" date="2002" name="Nature">
        <title>Sequence and analysis of chromosome 2 of Dictyostelium discoideum.</title>
        <authorList>
            <person name="Gloeckner G."/>
            <person name="Eichinger L."/>
            <person name="Szafranski K."/>
            <person name="Pachebat J.A."/>
            <person name="Bankier A.T."/>
            <person name="Dear P.H."/>
            <person name="Lehmann R."/>
            <person name="Baumgart C."/>
            <person name="Parra G."/>
            <person name="Abril J.F."/>
            <person name="Guigo R."/>
            <person name="Kumpf K."/>
            <person name="Tunggal B."/>
            <person name="Cox E.C."/>
            <person name="Quail M.A."/>
            <person name="Platzer M."/>
            <person name="Rosenthal A."/>
            <person name="Noegel A.A."/>
        </authorList>
    </citation>
    <scope>NUCLEOTIDE SEQUENCE [LARGE SCALE GENOMIC DNA]</scope>
    <source>
        <strain>AX4</strain>
    </source>
</reference>
<reference key="3">
    <citation type="journal article" date="2005" name="Nature">
        <title>The genome of the social amoeba Dictyostelium discoideum.</title>
        <authorList>
            <person name="Eichinger L."/>
            <person name="Pachebat J.A."/>
            <person name="Gloeckner G."/>
            <person name="Rajandream M.A."/>
            <person name="Sucgang R."/>
            <person name="Berriman M."/>
            <person name="Song J."/>
            <person name="Olsen R."/>
            <person name="Szafranski K."/>
            <person name="Xu Q."/>
            <person name="Tunggal B."/>
            <person name="Kummerfeld S."/>
            <person name="Madera M."/>
            <person name="Konfortov B.A."/>
            <person name="Rivero F."/>
            <person name="Bankier A.T."/>
            <person name="Lehmann R."/>
            <person name="Hamlin N."/>
            <person name="Davies R."/>
            <person name="Gaudet P."/>
            <person name="Fey P."/>
            <person name="Pilcher K."/>
            <person name="Chen G."/>
            <person name="Saunders D."/>
            <person name="Sodergren E.J."/>
            <person name="Davis P."/>
            <person name="Kerhornou A."/>
            <person name="Nie X."/>
            <person name="Hall N."/>
            <person name="Anjard C."/>
            <person name="Hemphill L."/>
            <person name="Bason N."/>
            <person name="Farbrother P."/>
            <person name="Desany B."/>
            <person name="Just E."/>
            <person name="Morio T."/>
            <person name="Rost R."/>
            <person name="Churcher C.M."/>
            <person name="Cooper J."/>
            <person name="Haydock S."/>
            <person name="van Driessche N."/>
            <person name="Cronin A."/>
            <person name="Goodhead I."/>
            <person name="Muzny D.M."/>
            <person name="Mourier T."/>
            <person name="Pain A."/>
            <person name="Lu M."/>
            <person name="Harper D."/>
            <person name="Lindsay R."/>
            <person name="Hauser H."/>
            <person name="James K.D."/>
            <person name="Quiles M."/>
            <person name="Madan Babu M."/>
            <person name="Saito T."/>
            <person name="Buchrieser C."/>
            <person name="Wardroper A."/>
            <person name="Felder M."/>
            <person name="Thangavelu M."/>
            <person name="Johnson D."/>
            <person name="Knights A."/>
            <person name="Loulseged H."/>
            <person name="Mungall K.L."/>
            <person name="Oliver K."/>
            <person name="Price C."/>
            <person name="Quail M.A."/>
            <person name="Urushihara H."/>
            <person name="Hernandez J."/>
            <person name="Rabbinowitsch E."/>
            <person name="Steffen D."/>
            <person name="Sanders M."/>
            <person name="Ma J."/>
            <person name="Kohara Y."/>
            <person name="Sharp S."/>
            <person name="Simmonds M.N."/>
            <person name="Spiegler S."/>
            <person name="Tivey A."/>
            <person name="Sugano S."/>
            <person name="White B."/>
            <person name="Walker D."/>
            <person name="Woodward J.R."/>
            <person name="Winckler T."/>
            <person name="Tanaka Y."/>
            <person name="Shaulsky G."/>
            <person name="Schleicher M."/>
            <person name="Weinstock G.M."/>
            <person name="Rosenthal A."/>
            <person name="Cox E.C."/>
            <person name="Chisholm R.L."/>
            <person name="Gibbs R.A."/>
            <person name="Loomis W.F."/>
            <person name="Platzer M."/>
            <person name="Kay R.R."/>
            <person name="Williams J.G."/>
            <person name="Dear P.H."/>
            <person name="Noegel A.A."/>
            <person name="Barrell B.G."/>
            <person name="Kuspa A."/>
        </authorList>
    </citation>
    <scope>NUCLEOTIDE SEQUENCE [LARGE SCALE GENOMIC DNA]</scope>
    <source>
        <strain>AX4</strain>
    </source>
</reference>
<gene>
    <name type="primary">vatP</name>
    <name type="ORF">DDB_G0274381</name>
</gene>
<accession>P54642</accession>
<accession>Q554K4</accession>
<evidence type="ECO:0000250" key="1"/>
<evidence type="ECO:0000255" key="2"/>
<evidence type="ECO:0000305" key="3"/>
<proteinExistence type="evidence at transcript level"/>
<protein>
    <recommendedName>
        <fullName>V-type proton ATPase proteolipid subunit</fullName>
        <shortName>V-ATPase 16 kDa proteolipid subunit</shortName>
    </recommendedName>
    <alternativeName>
        <fullName>Vacuolar proton pump 16 kDa proteolipid subunit</fullName>
    </alternativeName>
</protein>
<keyword id="KW-0375">Hydrogen ion transport</keyword>
<keyword id="KW-0406">Ion transport</keyword>
<keyword id="KW-0472">Membrane</keyword>
<keyword id="KW-1185">Reference proteome</keyword>
<keyword id="KW-0812">Transmembrane</keyword>
<keyword id="KW-1133">Transmembrane helix</keyword>
<keyword id="KW-0813">Transport</keyword>
<keyword id="KW-0926">Vacuole</keyword>
<organism>
    <name type="scientific">Dictyostelium discoideum</name>
    <name type="common">Social amoeba</name>
    <dbReference type="NCBI Taxonomy" id="44689"/>
    <lineage>
        <taxon>Eukaryota</taxon>
        <taxon>Amoebozoa</taxon>
        <taxon>Evosea</taxon>
        <taxon>Eumycetozoa</taxon>
        <taxon>Dictyostelia</taxon>
        <taxon>Dictyosteliales</taxon>
        <taxon>Dictyosteliaceae</taxon>
        <taxon>Dictyostelium</taxon>
    </lineage>
</organism>
<name>VATL_DICDI</name>
<dbReference type="EMBL" id="X90516">
    <property type="protein sequence ID" value="CAA62102.1"/>
    <property type="molecule type" value="mRNA"/>
</dbReference>
<dbReference type="EMBL" id="AAFI02000012">
    <property type="protein sequence ID" value="EAL70083.1"/>
    <property type="molecule type" value="Genomic_DNA"/>
</dbReference>
<dbReference type="PIR" id="S58350">
    <property type="entry name" value="S58350"/>
</dbReference>
<dbReference type="RefSeq" id="XP_644319.1">
    <property type="nucleotide sequence ID" value="XM_639227.1"/>
</dbReference>
<dbReference type="SMR" id="P54642"/>
<dbReference type="FunCoup" id="P54642">
    <property type="interactions" value="461"/>
</dbReference>
<dbReference type="STRING" id="44689.P54642"/>
<dbReference type="PaxDb" id="44689-DDB0185071"/>
<dbReference type="EnsemblProtists" id="EAL70083">
    <property type="protein sequence ID" value="EAL70083"/>
    <property type="gene ID" value="DDB_G0274381"/>
</dbReference>
<dbReference type="GeneID" id="8619747"/>
<dbReference type="KEGG" id="ddi:DDB_G0274381"/>
<dbReference type="dictyBase" id="DDB_G0274381">
    <property type="gene designation" value="vatP"/>
</dbReference>
<dbReference type="VEuPathDB" id="AmoebaDB:DDB_G0274381"/>
<dbReference type="eggNOG" id="KOG0232">
    <property type="taxonomic scope" value="Eukaryota"/>
</dbReference>
<dbReference type="HOGENOM" id="CLU_085752_1_1_1"/>
<dbReference type="InParanoid" id="P54642"/>
<dbReference type="OMA" id="MGVMKPD"/>
<dbReference type="PhylomeDB" id="P54642"/>
<dbReference type="Reactome" id="R-DDI-1222556">
    <property type="pathway name" value="ROS and RNS production in phagocytes"/>
</dbReference>
<dbReference type="Reactome" id="R-DDI-6798695">
    <property type="pathway name" value="Neutrophil degranulation"/>
</dbReference>
<dbReference type="Reactome" id="R-DDI-77387">
    <property type="pathway name" value="Insulin receptor recycling"/>
</dbReference>
<dbReference type="Reactome" id="R-DDI-917977">
    <property type="pathway name" value="Transferrin endocytosis and recycling"/>
</dbReference>
<dbReference type="Reactome" id="R-DDI-9639288">
    <property type="pathway name" value="Amino acids regulate mTORC1"/>
</dbReference>
<dbReference type="PRO" id="PR:P54642"/>
<dbReference type="Proteomes" id="UP000002195">
    <property type="component" value="Chromosome 2"/>
</dbReference>
<dbReference type="GO" id="GO:0031164">
    <property type="term" value="C:contractile vacuolar membrane"/>
    <property type="evidence" value="ECO:0000314"/>
    <property type="project" value="dictyBase"/>
</dbReference>
<dbReference type="GO" id="GO:0016020">
    <property type="term" value="C:membrane"/>
    <property type="evidence" value="ECO:0000318"/>
    <property type="project" value="GO_Central"/>
</dbReference>
<dbReference type="GO" id="GO:0033179">
    <property type="term" value="C:proton-transporting V-type ATPase, V0 domain"/>
    <property type="evidence" value="ECO:0007669"/>
    <property type="project" value="InterPro"/>
</dbReference>
<dbReference type="GO" id="GO:0016471">
    <property type="term" value="C:vacuolar proton-transporting V-type ATPase complex"/>
    <property type="evidence" value="ECO:0000314"/>
    <property type="project" value="dictyBase"/>
</dbReference>
<dbReference type="GO" id="GO:0046961">
    <property type="term" value="F:proton-transporting ATPase activity, rotational mechanism"/>
    <property type="evidence" value="ECO:0007669"/>
    <property type="project" value="InterPro"/>
</dbReference>
<dbReference type="GO" id="GO:0019954">
    <property type="term" value="P:asexual reproduction"/>
    <property type="evidence" value="ECO:0000315"/>
    <property type="project" value="dictyBase"/>
</dbReference>
<dbReference type="GO" id="GO:0006816">
    <property type="term" value="P:calcium ion transport"/>
    <property type="evidence" value="ECO:0000314"/>
    <property type="project" value="dictyBase"/>
</dbReference>
<dbReference type="GO" id="GO:0030587">
    <property type="term" value="P:sorocarp development"/>
    <property type="evidence" value="ECO:0000315"/>
    <property type="project" value="dictyBase"/>
</dbReference>
<dbReference type="CDD" id="cd18175">
    <property type="entry name" value="ATP-synt_Vo_c_ATP6C_rpt1"/>
    <property type="match status" value="1"/>
</dbReference>
<dbReference type="CDD" id="cd18176">
    <property type="entry name" value="ATP-synt_Vo_c_ATP6C_rpt2"/>
    <property type="match status" value="1"/>
</dbReference>
<dbReference type="FunFam" id="1.20.120.610:FF:000001">
    <property type="entry name" value="V-type proton ATPase proteolipid subunit"/>
    <property type="match status" value="1"/>
</dbReference>
<dbReference type="Gene3D" id="1.20.120.610">
    <property type="entry name" value="lithium bound rotor ring of v- atpase"/>
    <property type="match status" value="1"/>
</dbReference>
<dbReference type="InterPro" id="IPR002379">
    <property type="entry name" value="ATPase_proteolipid_c-like_dom"/>
</dbReference>
<dbReference type="InterPro" id="IPR000245">
    <property type="entry name" value="ATPase_proteolipid_csu"/>
</dbReference>
<dbReference type="InterPro" id="IPR011555">
    <property type="entry name" value="ATPase_proteolipid_su_C_euk"/>
</dbReference>
<dbReference type="InterPro" id="IPR035921">
    <property type="entry name" value="F/V-ATP_Csub_sf"/>
</dbReference>
<dbReference type="NCBIfam" id="TIGR01100">
    <property type="entry name" value="V_ATP_synt_C"/>
    <property type="match status" value="1"/>
</dbReference>
<dbReference type="PANTHER" id="PTHR10263">
    <property type="entry name" value="V-TYPE PROTON ATPASE PROTEOLIPID SUBUNIT"/>
    <property type="match status" value="1"/>
</dbReference>
<dbReference type="Pfam" id="PF00137">
    <property type="entry name" value="ATP-synt_C"/>
    <property type="match status" value="2"/>
</dbReference>
<dbReference type="PRINTS" id="PR00122">
    <property type="entry name" value="VACATPASE"/>
</dbReference>
<dbReference type="SUPFAM" id="SSF81333">
    <property type="entry name" value="F1F0 ATP synthase subunit C"/>
    <property type="match status" value="1"/>
</dbReference>
<comment type="function">
    <text>Proton-conducting pore forming subunit of the membrane integral V0 complex of vacuolar ATPase. V-ATPase is responsible for acidifying a variety of intracellular compartments in eukaryotic cells.</text>
</comment>
<comment type="subunit">
    <text>V-ATPase is a heteromultimeric enzyme composed of a peripheral catalytic V1 complex (main components: subunits A, B, C, D, E, and F) attached to an integral membrane V0 proton pore complex (main component: the proteolipid protein; which is present as a hexamer that forms the proton-conducting pore).</text>
</comment>
<comment type="subcellular location">
    <subcellularLocation>
        <location>Vacuole membrane</location>
        <topology>Multi-pass membrane protein</topology>
    </subcellularLocation>
</comment>
<comment type="developmental stage">
    <text>Expression is maintained at a relatively constant level during growth and development.</text>
</comment>
<comment type="similarity">
    <text evidence="3">Belongs to the V-ATPase proteolipid subunit family.</text>
</comment>
<feature type="chain" id="PRO_0000071748" description="V-type proton ATPase proteolipid subunit">
    <location>
        <begin position="1"/>
        <end position="196"/>
    </location>
</feature>
<feature type="topological domain" description="Lumenal" evidence="2">
    <location>
        <begin position="1"/>
        <end position="25"/>
    </location>
</feature>
<feature type="transmembrane region" description="Helical" evidence="2">
    <location>
        <begin position="26"/>
        <end position="46"/>
    </location>
</feature>
<feature type="topological domain" description="Cytoplasmic" evidence="2">
    <location>
        <begin position="47"/>
        <end position="72"/>
    </location>
</feature>
<feature type="transmembrane region" description="Helical" evidence="2">
    <location>
        <begin position="73"/>
        <end position="93"/>
    </location>
</feature>
<feature type="topological domain" description="Lumenal" evidence="2">
    <location>
        <begin position="94"/>
        <end position="111"/>
    </location>
</feature>
<feature type="transmembrane region" description="Helical" evidence="2">
    <location>
        <begin position="112"/>
        <end position="132"/>
    </location>
</feature>
<feature type="topological domain" description="Cytoplasmic" evidence="2">
    <location>
        <begin position="133"/>
        <end position="150"/>
    </location>
</feature>
<feature type="transmembrane region" description="Helical" evidence="2">
    <location>
        <begin position="151"/>
        <end position="171"/>
    </location>
</feature>
<feature type="topological domain" description="Lumenal" evidence="2">
    <location>
        <begin position="172"/>
        <end position="196"/>
    </location>
</feature>
<feature type="site" description="Essential for proton translocation" evidence="1">
    <location>
        <position position="158"/>
    </location>
</feature>
<sequence length="196" mass="20149">MFQLLSFLLSGEATAVERIITDACPVYAPFFGAMGVTAALVFTVMGAAYGTAKASVGISNMGVMKPDLVIKAFIPVIFAGVIAIYGLIICVILVGGIKPNANYTLMKSFTDLGAGLTVGLCGLAAGMAIGIVGDSGVRAFGQQPKLYVIMMLILIFSEALGLYGLIIGILLSSVSDTYCPGQALVPLNSGNVIGKN</sequence>